<proteinExistence type="inferred from homology"/>
<gene>
    <name evidence="1" type="primary">purA</name>
    <name type="ordered locus">lpl0526</name>
</gene>
<sequence>MGKNVVVLGTQWGDEGKGKIVDLLTQDAQVVVRYQGGHNAGHTLKINGVKTVLRLIPSGMLRPNVTCYVANGVVLSPQALLSEIKELEGNGINVRERLRISLACPLILPYHIALDKARETHMGKSAIGTTGRGIGPAYEDKVARRALRVGDLFHRDRFANKLTELLDYHNFVLTQYFKQPAVDLESLLDESLQWAEELRPMVCDVSACLHEHRKQGENILFEGAQGVYLDIDHGTYPYVTSSNTCVGSVINGAGFGPRYIDYVLGITKAYTTRVGGGPFPTELLDDVGKRIAERGQEFGAVTGRPRRCGWFDAVLLKRSIELNSISGLCVTKLDVLDGLEVLRIAVAYKDRDGNILSRPPLAADDFNDLLPVYEELPGWQESTADVTVMSDLPANARAYLKRIEEILGIPIDMLSTGPERDSTITLRDPFL</sequence>
<keyword id="KW-0963">Cytoplasm</keyword>
<keyword id="KW-0342">GTP-binding</keyword>
<keyword id="KW-0436">Ligase</keyword>
<keyword id="KW-0460">Magnesium</keyword>
<keyword id="KW-0479">Metal-binding</keyword>
<keyword id="KW-0547">Nucleotide-binding</keyword>
<keyword id="KW-0658">Purine biosynthesis</keyword>
<organism>
    <name type="scientific">Legionella pneumophila (strain Lens)</name>
    <dbReference type="NCBI Taxonomy" id="297245"/>
    <lineage>
        <taxon>Bacteria</taxon>
        <taxon>Pseudomonadati</taxon>
        <taxon>Pseudomonadota</taxon>
        <taxon>Gammaproteobacteria</taxon>
        <taxon>Legionellales</taxon>
        <taxon>Legionellaceae</taxon>
        <taxon>Legionella</taxon>
    </lineage>
</organism>
<comment type="function">
    <text evidence="1">Plays an important role in the de novo pathway of purine nucleotide biosynthesis. Catalyzes the first committed step in the biosynthesis of AMP from IMP.</text>
</comment>
<comment type="catalytic activity">
    <reaction evidence="1">
        <text>IMP + L-aspartate + GTP = N(6)-(1,2-dicarboxyethyl)-AMP + GDP + phosphate + 2 H(+)</text>
        <dbReference type="Rhea" id="RHEA:15753"/>
        <dbReference type="ChEBI" id="CHEBI:15378"/>
        <dbReference type="ChEBI" id="CHEBI:29991"/>
        <dbReference type="ChEBI" id="CHEBI:37565"/>
        <dbReference type="ChEBI" id="CHEBI:43474"/>
        <dbReference type="ChEBI" id="CHEBI:57567"/>
        <dbReference type="ChEBI" id="CHEBI:58053"/>
        <dbReference type="ChEBI" id="CHEBI:58189"/>
        <dbReference type="EC" id="6.3.4.4"/>
    </reaction>
</comment>
<comment type="cofactor">
    <cofactor evidence="1">
        <name>Mg(2+)</name>
        <dbReference type="ChEBI" id="CHEBI:18420"/>
    </cofactor>
    <text evidence="1">Binds 1 Mg(2+) ion per subunit.</text>
</comment>
<comment type="pathway">
    <text evidence="1">Purine metabolism; AMP biosynthesis via de novo pathway; AMP from IMP: step 1/2.</text>
</comment>
<comment type="subunit">
    <text evidence="1">Homodimer.</text>
</comment>
<comment type="subcellular location">
    <subcellularLocation>
        <location evidence="1">Cytoplasm</location>
    </subcellularLocation>
</comment>
<comment type="similarity">
    <text evidence="1">Belongs to the adenylosuccinate synthetase family.</text>
</comment>
<feature type="chain" id="PRO_0000224289" description="Adenylosuccinate synthetase">
    <location>
        <begin position="1"/>
        <end position="431"/>
    </location>
</feature>
<feature type="active site" description="Proton acceptor" evidence="1">
    <location>
        <position position="14"/>
    </location>
</feature>
<feature type="active site" description="Proton donor" evidence="1">
    <location>
        <position position="42"/>
    </location>
</feature>
<feature type="binding site" evidence="1">
    <location>
        <begin position="13"/>
        <end position="19"/>
    </location>
    <ligand>
        <name>GTP</name>
        <dbReference type="ChEBI" id="CHEBI:37565"/>
    </ligand>
</feature>
<feature type="binding site" description="in other chain" evidence="1">
    <location>
        <begin position="14"/>
        <end position="17"/>
    </location>
    <ligand>
        <name>IMP</name>
        <dbReference type="ChEBI" id="CHEBI:58053"/>
        <note>ligand shared between dimeric partners</note>
    </ligand>
</feature>
<feature type="binding site" evidence="1">
    <location>
        <position position="14"/>
    </location>
    <ligand>
        <name>Mg(2+)</name>
        <dbReference type="ChEBI" id="CHEBI:18420"/>
    </ligand>
</feature>
<feature type="binding site" description="in other chain" evidence="1">
    <location>
        <begin position="39"/>
        <end position="42"/>
    </location>
    <ligand>
        <name>IMP</name>
        <dbReference type="ChEBI" id="CHEBI:58053"/>
        <note>ligand shared between dimeric partners</note>
    </ligand>
</feature>
<feature type="binding site" evidence="1">
    <location>
        <begin position="41"/>
        <end position="43"/>
    </location>
    <ligand>
        <name>GTP</name>
        <dbReference type="ChEBI" id="CHEBI:37565"/>
    </ligand>
</feature>
<feature type="binding site" evidence="1">
    <location>
        <position position="41"/>
    </location>
    <ligand>
        <name>Mg(2+)</name>
        <dbReference type="ChEBI" id="CHEBI:18420"/>
    </ligand>
</feature>
<feature type="binding site" description="in other chain" evidence="1">
    <location>
        <position position="130"/>
    </location>
    <ligand>
        <name>IMP</name>
        <dbReference type="ChEBI" id="CHEBI:58053"/>
        <note>ligand shared between dimeric partners</note>
    </ligand>
</feature>
<feature type="binding site" evidence="1">
    <location>
        <position position="144"/>
    </location>
    <ligand>
        <name>IMP</name>
        <dbReference type="ChEBI" id="CHEBI:58053"/>
        <note>ligand shared between dimeric partners</note>
    </ligand>
</feature>
<feature type="binding site" description="in other chain" evidence="1">
    <location>
        <position position="225"/>
    </location>
    <ligand>
        <name>IMP</name>
        <dbReference type="ChEBI" id="CHEBI:58053"/>
        <note>ligand shared between dimeric partners</note>
    </ligand>
</feature>
<feature type="binding site" description="in other chain" evidence="1">
    <location>
        <position position="240"/>
    </location>
    <ligand>
        <name>IMP</name>
        <dbReference type="ChEBI" id="CHEBI:58053"/>
        <note>ligand shared between dimeric partners</note>
    </ligand>
</feature>
<feature type="binding site" evidence="1">
    <location>
        <begin position="300"/>
        <end position="306"/>
    </location>
    <ligand>
        <name>substrate</name>
    </ligand>
</feature>
<feature type="binding site" description="in other chain" evidence="1">
    <location>
        <position position="304"/>
    </location>
    <ligand>
        <name>IMP</name>
        <dbReference type="ChEBI" id="CHEBI:58053"/>
        <note>ligand shared between dimeric partners</note>
    </ligand>
</feature>
<feature type="binding site" evidence="1">
    <location>
        <position position="306"/>
    </location>
    <ligand>
        <name>GTP</name>
        <dbReference type="ChEBI" id="CHEBI:37565"/>
    </ligand>
</feature>
<feature type="binding site" evidence="1">
    <location>
        <begin position="332"/>
        <end position="334"/>
    </location>
    <ligand>
        <name>GTP</name>
        <dbReference type="ChEBI" id="CHEBI:37565"/>
    </ligand>
</feature>
<feature type="binding site" evidence="1">
    <location>
        <begin position="415"/>
        <end position="417"/>
    </location>
    <ligand>
        <name>GTP</name>
        <dbReference type="ChEBI" id="CHEBI:37565"/>
    </ligand>
</feature>
<reference key="1">
    <citation type="journal article" date="2004" name="Nat. Genet.">
        <title>Evidence in the Legionella pneumophila genome for exploitation of host cell functions and high genome plasticity.</title>
        <authorList>
            <person name="Cazalet C."/>
            <person name="Rusniok C."/>
            <person name="Brueggemann H."/>
            <person name="Zidane N."/>
            <person name="Magnier A."/>
            <person name="Ma L."/>
            <person name="Tichit M."/>
            <person name="Jarraud S."/>
            <person name="Bouchier C."/>
            <person name="Vandenesch F."/>
            <person name="Kunst F."/>
            <person name="Etienne J."/>
            <person name="Glaser P."/>
            <person name="Buchrieser C."/>
        </authorList>
    </citation>
    <scope>NUCLEOTIDE SEQUENCE [LARGE SCALE GENOMIC DNA]</scope>
    <source>
        <strain>Lens</strain>
    </source>
</reference>
<accession>Q5WZ56</accession>
<name>PURA_LEGPL</name>
<protein>
    <recommendedName>
        <fullName evidence="1">Adenylosuccinate synthetase</fullName>
        <shortName evidence="1">AMPSase</shortName>
        <shortName evidence="1">AdSS</shortName>
        <ecNumber evidence="1">6.3.4.4</ecNumber>
    </recommendedName>
    <alternativeName>
        <fullName evidence="1">IMP--aspartate ligase</fullName>
    </alternativeName>
</protein>
<dbReference type="EC" id="6.3.4.4" evidence="1"/>
<dbReference type="EMBL" id="CR628337">
    <property type="protein sequence ID" value="CAH14756.1"/>
    <property type="molecule type" value="Genomic_DNA"/>
</dbReference>
<dbReference type="RefSeq" id="WP_011214729.1">
    <property type="nucleotide sequence ID" value="NC_006369.1"/>
</dbReference>
<dbReference type="SMR" id="Q5WZ56"/>
<dbReference type="KEGG" id="lpf:lpl0526"/>
<dbReference type="LegioList" id="lpl0526"/>
<dbReference type="HOGENOM" id="CLU_029848_0_0_6"/>
<dbReference type="UniPathway" id="UPA00075">
    <property type="reaction ID" value="UER00335"/>
</dbReference>
<dbReference type="Proteomes" id="UP000002517">
    <property type="component" value="Chromosome"/>
</dbReference>
<dbReference type="GO" id="GO:0005737">
    <property type="term" value="C:cytoplasm"/>
    <property type="evidence" value="ECO:0007669"/>
    <property type="project" value="UniProtKB-SubCell"/>
</dbReference>
<dbReference type="GO" id="GO:0004019">
    <property type="term" value="F:adenylosuccinate synthase activity"/>
    <property type="evidence" value="ECO:0007669"/>
    <property type="project" value="UniProtKB-UniRule"/>
</dbReference>
<dbReference type="GO" id="GO:0005525">
    <property type="term" value="F:GTP binding"/>
    <property type="evidence" value="ECO:0007669"/>
    <property type="project" value="UniProtKB-UniRule"/>
</dbReference>
<dbReference type="GO" id="GO:0000287">
    <property type="term" value="F:magnesium ion binding"/>
    <property type="evidence" value="ECO:0007669"/>
    <property type="project" value="UniProtKB-UniRule"/>
</dbReference>
<dbReference type="GO" id="GO:0044208">
    <property type="term" value="P:'de novo' AMP biosynthetic process"/>
    <property type="evidence" value="ECO:0007669"/>
    <property type="project" value="UniProtKB-UniRule"/>
</dbReference>
<dbReference type="GO" id="GO:0046040">
    <property type="term" value="P:IMP metabolic process"/>
    <property type="evidence" value="ECO:0007669"/>
    <property type="project" value="TreeGrafter"/>
</dbReference>
<dbReference type="CDD" id="cd03108">
    <property type="entry name" value="AdSS"/>
    <property type="match status" value="1"/>
</dbReference>
<dbReference type="FunFam" id="1.10.300.10:FF:000001">
    <property type="entry name" value="Adenylosuccinate synthetase"/>
    <property type="match status" value="1"/>
</dbReference>
<dbReference type="FunFam" id="3.90.170.10:FF:000001">
    <property type="entry name" value="Adenylosuccinate synthetase"/>
    <property type="match status" value="1"/>
</dbReference>
<dbReference type="Gene3D" id="3.40.440.10">
    <property type="entry name" value="Adenylosuccinate Synthetase, subunit A, domain 1"/>
    <property type="match status" value="1"/>
</dbReference>
<dbReference type="Gene3D" id="1.10.300.10">
    <property type="entry name" value="Adenylosuccinate Synthetase, subunit A, domain 2"/>
    <property type="match status" value="1"/>
</dbReference>
<dbReference type="Gene3D" id="3.90.170.10">
    <property type="entry name" value="Adenylosuccinate Synthetase, subunit A, domain 3"/>
    <property type="match status" value="1"/>
</dbReference>
<dbReference type="HAMAP" id="MF_00011">
    <property type="entry name" value="Adenylosucc_synth"/>
    <property type="match status" value="1"/>
</dbReference>
<dbReference type="InterPro" id="IPR018220">
    <property type="entry name" value="Adenylosuccin_syn_GTP-bd"/>
</dbReference>
<dbReference type="InterPro" id="IPR033128">
    <property type="entry name" value="Adenylosuccin_syn_Lys_AS"/>
</dbReference>
<dbReference type="InterPro" id="IPR042109">
    <property type="entry name" value="Adenylosuccinate_synth_dom1"/>
</dbReference>
<dbReference type="InterPro" id="IPR042110">
    <property type="entry name" value="Adenylosuccinate_synth_dom2"/>
</dbReference>
<dbReference type="InterPro" id="IPR042111">
    <property type="entry name" value="Adenylosuccinate_synth_dom3"/>
</dbReference>
<dbReference type="InterPro" id="IPR001114">
    <property type="entry name" value="Adenylosuccinate_synthetase"/>
</dbReference>
<dbReference type="InterPro" id="IPR027417">
    <property type="entry name" value="P-loop_NTPase"/>
</dbReference>
<dbReference type="NCBIfam" id="NF002223">
    <property type="entry name" value="PRK01117.1"/>
    <property type="match status" value="1"/>
</dbReference>
<dbReference type="NCBIfam" id="TIGR00184">
    <property type="entry name" value="purA"/>
    <property type="match status" value="1"/>
</dbReference>
<dbReference type="PANTHER" id="PTHR11846">
    <property type="entry name" value="ADENYLOSUCCINATE SYNTHETASE"/>
    <property type="match status" value="1"/>
</dbReference>
<dbReference type="PANTHER" id="PTHR11846:SF0">
    <property type="entry name" value="ADENYLOSUCCINATE SYNTHETASE"/>
    <property type="match status" value="1"/>
</dbReference>
<dbReference type="Pfam" id="PF00709">
    <property type="entry name" value="Adenylsucc_synt"/>
    <property type="match status" value="1"/>
</dbReference>
<dbReference type="SMART" id="SM00788">
    <property type="entry name" value="Adenylsucc_synt"/>
    <property type="match status" value="1"/>
</dbReference>
<dbReference type="SUPFAM" id="SSF52540">
    <property type="entry name" value="P-loop containing nucleoside triphosphate hydrolases"/>
    <property type="match status" value="1"/>
</dbReference>
<dbReference type="PROSITE" id="PS01266">
    <property type="entry name" value="ADENYLOSUCCIN_SYN_1"/>
    <property type="match status" value="1"/>
</dbReference>
<dbReference type="PROSITE" id="PS00513">
    <property type="entry name" value="ADENYLOSUCCIN_SYN_2"/>
    <property type="match status" value="1"/>
</dbReference>
<evidence type="ECO:0000255" key="1">
    <source>
        <dbReference type="HAMAP-Rule" id="MF_00011"/>
    </source>
</evidence>